<reference key="1">
    <citation type="journal article" date="1996" name="Yeast">
        <title>Fifteen open reading frames in a 30.8 kb region of the right arm of chromosome VI from Saccharomyces cerevisiae.</title>
        <authorList>
            <person name="Eki T."/>
            <person name="Naitou M."/>
            <person name="Hagiwara H."/>
            <person name="Abe M."/>
            <person name="Ozawa M."/>
            <person name="Sasanuma S."/>
            <person name="Sasanuma M."/>
            <person name="Tsuchiya Y."/>
            <person name="Shibata T."/>
            <person name="Watanabe K."/>
            <person name="Ono A."/>
            <person name="Yamazaki M."/>
            <person name="Tashiro H."/>
            <person name="Hanaoka F."/>
            <person name="Murakami Y."/>
        </authorList>
    </citation>
    <scope>NUCLEOTIDE SEQUENCE [GENOMIC DNA]</scope>
    <source>
        <strain>ATCC 204511 / S288c / AB972</strain>
    </source>
</reference>
<reference key="2">
    <citation type="journal article" date="1995" name="Nat. Genet.">
        <title>Analysis of the nucleotide sequence of chromosome VI from Saccharomyces cerevisiae.</title>
        <authorList>
            <person name="Murakami Y."/>
            <person name="Naitou M."/>
            <person name="Hagiwara H."/>
            <person name="Shibata T."/>
            <person name="Ozawa M."/>
            <person name="Sasanuma S."/>
            <person name="Sasanuma M."/>
            <person name="Tsuchiya Y."/>
            <person name="Soeda E."/>
            <person name="Yokoyama K."/>
            <person name="Yamazaki M."/>
            <person name="Tashiro H."/>
            <person name="Eki T."/>
        </authorList>
    </citation>
    <scope>NUCLEOTIDE SEQUENCE [LARGE SCALE GENOMIC DNA]</scope>
    <source>
        <strain>ATCC 204508 / S288c</strain>
    </source>
</reference>
<reference key="3">
    <citation type="journal article" date="2014" name="G3 (Bethesda)">
        <title>The reference genome sequence of Saccharomyces cerevisiae: Then and now.</title>
        <authorList>
            <person name="Engel S.R."/>
            <person name="Dietrich F.S."/>
            <person name="Fisk D.G."/>
            <person name="Binkley G."/>
            <person name="Balakrishnan R."/>
            <person name="Costanzo M.C."/>
            <person name="Dwight S.S."/>
            <person name="Hitz B.C."/>
            <person name="Karra K."/>
            <person name="Nash R.S."/>
            <person name="Weng S."/>
            <person name="Wong E.D."/>
            <person name="Lloyd P."/>
            <person name="Skrzypek M.S."/>
            <person name="Miyasato S.R."/>
            <person name="Simison M."/>
            <person name="Cherry J.M."/>
        </authorList>
    </citation>
    <scope>GENOME REANNOTATION</scope>
    <source>
        <strain>ATCC 204508 / S288c</strain>
    </source>
</reference>
<reference key="4">
    <citation type="journal article" date="2003" name="Nature">
        <title>Global analysis of protein expression in yeast.</title>
        <authorList>
            <person name="Ghaemmaghami S."/>
            <person name="Huh W.-K."/>
            <person name="Bower K."/>
            <person name="Howson R.W."/>
            <person name="Belle A."/>
            <person name="Dephoure N."/>
            <person name="O'Shea E.K."/>
            <person name="Weissman J.S."/>
        </authorList>
    </citation>
    <scope>LEVEL OF PROTEIN EXPRESSION [LARGE SCALE ANALYSIS]</scope>
</reference>
<reference key="5">
    <citation type="journal article" date="2007" name="J. Proteome Res.">
        <title>Large-scale phosphorylation analysis of alpha-factor-arrested Saccharomyces cerevisiae.</title>
        <authorList>
            <person name="Li X."/>
            <person name="Gerber S.A."/>
            <person name="Rudner A.D."/>
            <person name="Beausoleil S.A."/>
            <person name="Haas W."/>
            <person name="Villen J."/>
            <person name="Elias J.E."/>
            <person name="Gygi S.P."/>
        </authorList>
    </citation>
    <scope>PHOSPHORYLATION [LARGE SCALE ANALYSIS] AT TYR-354</scope>
    <scope>IDENTIFICATION BY MASS SPECTROMETRY [LARGE SCALE ANALYSIS]</scope>
    <source>
        <strain>ADR376</strain>
    </source>
</reference>
<reference key="6">
    <citation type="journal article" date="2013" name="PLoS Genet.">
        <title>A highly redundant gene network controls assembly of the outer spore wall in S. cerevisiae.</title>
        <authorList>
            <person name="Lin C.P."/>
            <person name="Kim C."/>
            <person name="Smith S.O."/>
            <person name="Neiman A.M."/>
        </authorList>
    </citation>
    <scope>FUNCTION</scope>
    <scope>DISRUPTION PHENOTYPE</scope>
</reference>
<organism>
    <name type="scientific">Saccharomyces cerevisiae (strain ATCC 204508 / S288c)</name>
    <name type="common">Baker's yeast</name>
    <dbReference type="NCBI Taxonomy" id="559292"/>
    <lineage>
        <taxon>Eukaryota</taxon>
        <taxon>Fungi</taxon>
        <taxon>Dikarya</taxon>
        <taxon>Ascomycota</taxon>
        <taxon>Saccharomycotina</taxon>
        <taxon>Saccharomycetes</taxon>
        <taxon>Saccharomycetales</taxon>
        <taxon>Saccharomycetaceae</taxon>
        <taxon>Saccharomyces</taxon>
    </lineage>
</organism>
<comment type="function">
    <text evidence="4">Involved in spore wall assembly.</text>
</comment>
<comment type="disruption phenotype">
    <text evidence="4">A combined deletion of the OSW7 and SHE10 has reduced dityrosine incorporation in the outer spore wall.</text>
</comment>
<comment type="miscellaneous">
    <text evidence="3">Present with 3170 molecules/cell in log phase SD medium.</text>
</comment>
<comment type="similarity">
    <text evidence="6">Belongs to the OSW/SHE family.</text>
</comment>
<accession>P43611</accession>
<accession>D6VTS2</accession>
<proteinExistence type="evidence at protein level"/>
<keyword id="KW-0597">Phosphoprotein</keyword>
<keyword id="KW-1185">Reference proteome</keyword>
<keyword id="KW-0732">Signal</keyword>
<keyword id="KW-0749">Sporulation</keyword>
<protein>
    <recommendedName>
        <fullName evidence="5">Outer spore wall protein 7</fullName>
    </recommendedName>
</protein>
<sequence>MKAVFKVTTALLACVFIARYLVCQQNGLGSFATDLQPICRHTEFSVGSLFDSKLVEGSAVSDYLVGKYSQSIKPLIERYPNSSLKRIMGYFYRFWYNIFSFLRLNELCCSLHSKLGPLLNHLRIAWYYLKPYTDNVKNVLENPFNSSTDWMKYGSFSADGTLTKPIFETDSETEDYEDDENENEDEDEDEDEDDVGIEDENKEYEFDGVQDGHGNSQLVTAAILQDLSKIIIGSNSHAELETYEAESLKMEYEAWIKAIDSKIHSAMALLDSEIQSVFEAEVQNKSIEITRNLDDLNTTVNEQLVFLDSKIKDINCTSKFDPVQNKIKYFDESGQVELEAYITKSSITSILKNYKIHLLDFEKSLFHSLDSFLTEMAKLAESIRLENVEVYEEWGDVMISQWSQRMAYMDVRGLHLEDQYDPAYIEENHSNWLRFMELKKKVISERNRLVKHDLDMTLILEWITKLKADFQNTKNNIQDTFLQRMNTADTLFKNRELKEQLEEEFVRQEH</sequence>
<gene>
    <name evidence="5" type="primary">OSW7</name>
    <name evidence="7" type="ordered locus">YFR039C</name>
</gene>
<name>OSW7_YEAST</name>
<feature type="signal peptide" evidence="1">
    <location>
        <begin position="1"/>
        <end position="23"/>
    </location>
</feature>
<feature type="chain" id="PRO_0000202694" description="Outer spore wall protein 7">
    <location>
        <begin position="24"/>
        <end position="510"/>
    </location>
</feature>
<feature type="region of interest" description="Disordered" evidence="2">
    <location>
        <begin position="167"/>
        <end position="195"/>
    </location>
</feature>
<feature type="compositionally biased region" description="Acidic residues" evidence="2">
    <location>
        <begin position="169"/>
        <end position="195"/>
    </location>
</feature>
<feature type="modified residue" description="Phosphotyrosine" evidence="8">
    <location>
        <position position="354"/>
    </location>
</feature>
<dbReference type="EMBL" id="D50617">
    <property type="protein sequence ID" value="BAA09278.1"/>
    <property type="molecule type" value="Genomic_DNA"/>
</dbReference>
<dbReference type="EMBL" id="BK006940">
    <property type="protein sequence ID" value="DAA12482.1"/>
    <property type="molecule type" value="Genomic_DNA"/>
</dbReference>
<dbReference type="PIR" id="S56294">
    <property type="entry name" value="S56294"/>
</dbReference>
<dbReference type="RefSeq" id="NP_116697.3">
    <property type="nucleotide sequence ID" value="NM_001180004.3"/>
</dbReference>
<dbReference type="BioGRID" id="31197">
    <property type="interactions" value="80"/>
</dbReference>
<dbReference type="DIP" id="DIP-912N"/>
<dbReference type="FunCoup" id="P43611">
    <property type="interactions" value="37"/>
</dbReference>
<dbReference type="IntAct" id="P43611">
    <property type="interactions" value="3"/>
</dbReference>
<dbReference type="STRING" id="4932.YFR039C"/>
<dbReference type="iPTMnet" id="P43611"/>
<dbReference type="PaxDb" id="4932-YFR039C"/>
<dbReference type="PeptideAtlas" id="P43611"/>
<dbReference type="EnsemblFungi" id="YFR039C_mRNA">
    <property type="protein sequence ID" value="YFR039C"/>
    <property type="gene ID" value="YFR039C"/>
</dbReference>
<dbReference type="GeneID" id="850600"/>
<dbReference type="KEGG" id="sce:YFR039C"/>
<dbReference type="AGR" id="SGD:S000001935"/>
<dbReference type="SGD" id="S000001935">
    <property type="gene designation" value="OSW7"/>
</dbReference>
<dbReference type="VEuPathDB" id="FungiDB:YFR039C"/>
<dbReference type="eggNOG" id="ENOG502S2G3">
    <property type="taxonomic scope" value="Eukaryota"/>
</dbReference>
<dbReference type="GeneTree" id="ENSGT00940000176455"/>
<dbReference type="HOGENOM" id="CLU_050901_0_0_1"/>
<dbReference type="InParanoid" id="P43611"/>
<dbReference type="OMA" id="DINCTSK"/>
<dbReference type="OrthoDB" id="4044605at2759"/>
<dbReference type="BioCyc" id="YEAST:G3O-30486-MONOMER"/>
<dbReference type="BioGRID-ORCS" id="850600">
    <property type="hits" value="9 hits in 10 CRISPR screens"/>
</dbReference>
<dbReference type="PRO" id="PR:P43611"/>
<dbReference type="Proteomes" id="UP000002311">
    <property type="component" value="Chromosome VI"/>
</dbReference>
<dbReference type="RNAct" id="P43611">
    <property type="molecule type" value="protein"/>
</dbReference>
<dbReference type="GO" id="GO:0005783">
    <property type="term" value="C:endoplasmic reticulum"/>
    <property type="evidence" value="ECO:0007005"/>
    <property type="project" value="SGD"/>
</dbReference>
<dbReference type="GO" id="GO:0030476">
    <property type="term" value="P:ascospore wall assembly"/>
    <property type="evidence" value="ECO:0000316"/>
    <property type="project" value="SGD"/>
</dbReference>
<evidence type="ECO:0000255" key="1"/>
<evidence type="ECO:0000256" key="2">
    <source>
        <dbReference type="SAM" id="MobiDB-lite"/>
    </source>
</evidence>
<evidence type="ECO:0000269" key="3">
    <source>
    </source>
</evidence>
<evidence type="ECO:0000269" key="4">
    <source>
    </source>
</evidence>
<evidence type="ECO:0000303" key="5">
    <source>
    </source>
</evidence>
<evidence type="ECO:0000305" key="6"/>
<evidence type="ECO:0000312" key="7">
    <source>
        <dbReference type="SGD" id="S000001935"/>
    </source>
</evidence>
<evidence type="ECO:0007744" key="8">
    <source>
    </source>
</evidence>